<dbReference type="EMBL" id="KF469327">
    <property type="protein sequence ID" value="AIG21841.1"/>
    <property type="molecule type" value="mRNA"/>
</dbReference>
<dbReference type="EMBL" id="CM000880">
    <property type="protein sequence ID" value="KQK13150.1"/>
    <property type="molecule type" value="Genomic_DNA"/>
</dbReference>
<dbReference type="RefSeq" id="NP_001288319.1">
    <property type="nucleotide sequence ID" value="NM_001301390.1"/>
</dbReference>
<dbReference type="SMR" id="I1GN76"/>
<dbReference type="FunCoup" id="I1GN76">
    <property type="interactions" value="37"/>
</dbReference>
<dbReference type="STRING" id="15368.I1GN76"/>
<dbReference type="EnsemblPlants" id="KQK13150">
    <property type="protein sequence ID" value="KQK13150"/>
    <property type="gene ID" value="BRADI_1g08340v3"/>
</dbReference>
<dbReference type="GeneID" id="100842079"/>
<dbReference type="Gramene" id="KQK13150">
    <property type="protein sequence ID" value="KQK13150"/>
    <property type="gene ID" value="BRADI_1g08340v3"/>
</dbReference>
<dbReference type="KEGG" id="bdi:100842079"/>
<dbReference type="eggNOG" id="KOG0014">
    <property type="taxonomic scope" value="Eukaryota"/>
</dbReference>
<dbReference type="HOGENOM" id="CLU_053053_0_2_1"/>
<dbReference type="OMA" id="HESTGSW"/>
<dbReference type="OrthoDB" id="1933443at2759"/>
<dbReference type="Proteomes" id="UP000008810">
    <property type="component" value="Chromosome 1"/>
</dbReference>
<dbReference type="ExpressionAtlas" id="I1GN76">
    <property type="expression patterns" value="baseline"/>
</dbReference>
<dbReference type="GO" id="GO:0005634">
    <property type="term" value="C:nucleus"/>
    <property type="evidence" value="ECO:0007669"/>
    <property type="project" value="UniProtKB-SubCell"/>
</dbReference>
<dbReference type="GO" id="GO:0000981">
    <property type="term" value="F:DNA-binding transcription factor activity, RNA polymerase II-specific"/>
    <property type="evidence" value="ECO:0000318"/>
    <property type="project" value="GO_Central"/>
</dbReference>
<dbReference type="GO" id="GO:0046983">
    <property type="term" value="F:protein dimerization activity"/>
    <property type="evidence" value="ECO:0007669"/>
    <property type="project" value="InterPro"/>
</dbReference>
<dbReference type="GO" id="GO:0000978">
    <property type="term" value="F:RNA polymerase II cis-regulatory region sequence-specific DNA binding"/>
    <property type="evidence" value="ECO:0000318"/>
    <property type="project" value="GO_Central"/>
</dbReference>
<dbReference type="GO" id="GO:0009631">
    <property type="term" value="P:cold acclimation"/>
    <property type="evidence" value="ECO:0000315"/>
    <property type="project" value="UniProtKB"/>
</dbReference>
<dbReference type="GO" id="GO:0010221">
    <property type="term" value="P:negative regulation of vernalization response"/>
    <property type="evidence" value="ECO:0000315"/>
    <property type="project" value="UniProtKB"/>
</dbReference>
<dbReference type="GO" id="GO:0045944">
    <property type="term" value="P:positive regulation of transcription by RNA polymerase II"/>
    <property type="evidence" value="ECO:0007669"/>
    <property type="project" value="InterPro"/>
</dbReference>
<dbReference type="GO" id="GO:0010220">
    <property type="term" value="P:positive regulation of vernalization response"/>
    <property type="evidence" value="ECO:0000314"/>
    <property type="project" value="UniProtKB"/>
</dbReference>
<dbReference type="GO" id="GO:2000028">
    <property type="term" value="P:regulation of photoperiodism, flowering"/>
    <property type="evidence" value="ECO:0000315"/>
    <property type="project" value="UniProtKB"/>
</dbReference>
<dbReference type="GO" id="GO:0006357">
    <property type="term" value="P:regulation of transcription by RNA polymerase II"/>
    <property type="evidence" value="ECO:0000318"/>
    <property type="project" value="GO_Central"/>
</dbReference>
<dbReference type="GO" id="GO:0010048">
    <property type="term" value="P:vernalization response"/>
    <property type="evidence" value="ECO:0000270"/>
    <property type="project" value="UniProtKB"/>
</dbReference>
<dbReference type="CDD" id="cd00265">
    <property type="entry name" value="MADS_MEF2_like"/>
    <property type="match status" value="1"/>
</dbReference>
<dbReference type="FunFam" id="3.40.1810.10:FF:000003">
    <property type="entry name" value="MADS-box transcription factor MADS-MC"/>
    <property type="match status" value="1"/>
</dbReference>
<dbReference type="Gene3D" id="3.40.1810.10">
    <property type="entry name" value="Transcription factor, MADS-box"/>
    <property type="match status" value="1"/>
</dbReference>
<dbReference type="InterPro" id="IPR050142">
    <property type="entry name" value="MADS-box/MEF2_TF"/>
</dbReference>
<dbReference type="InterPro" id="IPR033896">
    <property type="entry name" value="MEF2-like_N"/>
</dbReference>
<dbReference type="InterPro" id="IPR002487">
    <property type="entry name" value="TF_Kbox"/>
</dbReference>
<dbReference type="InterPro" id="IPR002100">
    <property type="entry name" value="TF_MADSbox"/>
</dbReference>
<dbReference type="InterPro" id="IPR036879">
    <property type="entry name" value="TF_MADSbox_sf"/>
</dbReference>
<dbReference type="PANTHER" id="PTHR48019">
    <property type="entry name" value="SERUM RESPONSE FACTOR HOMOLOG"/>
    <property type="match status" value="1"/>
</dbReference>
<dbReference type="Pfam" id="PF01486">
    <property type="entry name" value="K-box"/>
    <property type="match status" value="1"/>
</dbReference>
<dbReference type="Pfam" id="PF00319">
    <property type="entry name" value="SRF-TF"/>
    <property type="match status" value="1"/>
</dbReference>
<dbReference type="PRINTS" id="PR00404">
    <property type="entry name" value="MADSDOMAIN"/>
</dbReference>
<dbReference type="SMART" id="SM00432">
    <property type="entry name" value="MADS"/>
    <property type="match status" value="1"/>
</dbReference>
<dbReference type="SUPFAM" id="SSF55455">
    <property type="entry name" value="SRF-like"/>
    <property type="match status" value="1"/>
</dbReference>
<dbReference type="PROSITE" id="PS51297">
    <property type="entry name" value="K_BOX"/>
    <property type="match status" value="1"/>
</dbReference>
<dbReference type="PROSITE" id="PS00350">
    <property type="entry name" value="MADS_BOX_1"/>
    <property type="match status" value="1"/>
</dbReference>
<dbReference type="PROSITE" id="PS50066">
    <property type="entry name" value="MADS_BOX_2"/>
    <property type="match status" value="1"/>
</dbReference>
<gene>
    <name evidence="8" type="primary">VRN1</name>
    <name evidence="7" type="synonym">MADS56</name>
    <name evidence="9" type="ORF">BRADI_1g08340v3</name>
</gene>
<protein>
    <recommendedName>
        <fullName evidence="8">Protein VERNALIZATION 1</fullName>
        <shortName evidence="8">BdVRN1</shortName>
    </recommendedName>
    <alternativeName>
        <fullName evidence="7">MADS-box transcription factor 33</fullName>
        <shortName evidence="7">BdMADS56</shortName>
    </alternativeName>
</protein>
<organism>
    <name type="scientific">Brachypodium distachyon</name>
    <name type="common">Purple false brome</name>
    <name type="synonym">Trachynia distachya</name>
    <dbReference type="NCBI Taxonomy" id="15368"/>
    <lineage>
        <taxon>Eukaryota</taxon>
        <taxon>Viridiplantae</taxon>
        <taxon>Streptophyta</taxon>
        <taxon>Embryophyta</taxon>
        <taxon>Tracheophyta</taxon>
        <taxon>Spermatophyta</taxon>
        <taxon>Magnoliopsida</taxon>
        <taxon>Liliopsida</taxon>
        <taxon>Poales</taxon>
        <taxon>Poaceae</taxon>
        <taxon>BOP clade</taxon>
        <taxon>Pooideae</taxon>
        <taxon>Stipodae</taxon>
        <taxon>Brachypodieae</taxon>
        <taxon>Brachypodium</taxon>
    </lineage>
</organism>
<comment type="function">
    <text evidence="5 6">Component of a grass-specific mechanism of vernalization, a process by which prolonged cold exposure provides competence to flower in daylengths longer than 12 hours (PubMed:28584114, PubMed:28690631). Involved in the exit of vernalization and confers flowering competency at the expense of freezing tolerance, probably by promoting the expression of VRN3; this process is essential in cv. Bd29-1 for flowering but seems do not occur in cv. Bd21 (PubMed:28584114, PubMed:28690631).</text>
</comment>
<comment type="subcellular location">
    <subcellularLocation>
        <location evidence="2">Nucleus</location>
    </subcellularLocation>
</comment>
<comment type="induction">
    <text evidence="5 6">Accumulates during vernalization in cv. Bd29-1, but expression is independent of vernalization in cv. Bd21 (PubMed:28690631). Repressed epigenetically (H3K27me3 hallmarks) by RVR1 before vernalization and in the fall season (PubMed:28584114).</text>
</comment>
<comment type="disruption phenotype">
    <text evidence="6">Confers vernalization requirement for flowering in cv. Bd21 (PubMed:28690631). Lower expression of VRN3 (PubMed:28690631). Reduced freezing tolerance upon vernalization treatment associated with a constitutively expression of cold-responsive genes (e.g. CBF2, CBF3, CBF5, CBF6 and DREB2A) (PubMed:28690631).</text>
</comment>
<reference key="1">
    <citation type="journal article" date="2014" name="PLoS ONE">
        <title>Genome-wide analysis of the MADS-box gene family in Brachypodium distachyon.</title>
        <authorList>
            <person name="Wei B."/>
            <person name="Zhang R.-Z."/>
            <person name="Guo J.-J."/>
            <person name="Liu D.-M."/>
            <person name="Li A.-L."/>
            <person name="Fan R.-C."/>
            <person name="Mao L."/>
            <person name="Zhang X.-Q."/>
        </authorList>
    </citation>
    <scope>NUCLEOTIDE SEQUENCE [MRNA]</scope>
    <scope>GENE FAMILY</scope>
    <scope>NOMENCLATURE</scope>
    <source>
        <strain>cv. Bd21-3</strain>
    </source>
</reference>
<reference key="2">
    <citation type="journal article" date="2010" name="Nature">
        <title>Genome sequencing and analysis of the model grass Brachypodium distachyon.</title>
        <authorList>
            <consortium name="International Brachypodium Initiative"/>
        </authorList>
    </citation>
    <scope>NUCLEOTIDE SEQUENCE [LARGE SCALE GENOMIC DNA]</scope>
    <source>
        <strain>cv. Bd21</strain>
    </source>
</reference>
<reference key="3">
    <citation type="submission" date="2017-06" db="EMBL/GenBank/DDBJ databases">
        <title>WGS assembly of Brachypodium distachyon.</title>
        <authorList>
            <consortium name="The International Brachypodium Initiative"/>
            <person name="Lucas S."/>
            <person name="Harmon-Smith M."/>
            <person name="Lail K."/>
            <person name="Tice H."/>
            <person name="Grimwood J."/>
            <person name="Bruce D."/>
            <person name="Barry K."/>
            <person name="Shu S."/>
            <person name="Lindquist E."/>
            <person name="Wang M."/>
            <person name="Pitluck S."/>
            <person name="Vogel J.P."/>
            <person name="Garvin D.F."/>
            <person name="Mockler T.C."/>
            <person name="Schmutz J."/>
            <person name="Rokhsar D."/>
            <person name="Bevan M.W."/>
        </authorList>
    </citation>
    <scope>GENOME REANNOTATION</scope>
    <source>
        <strain>cv. Bd21</strain>
    </source>
</reference>
<reference key="4">
    <citation type="journal article" date="2017" name="Front. Plant Sci.">
        <title>BdVRN1 expression confers flowering competency and is negatively correlated with freezing tolerance in Brachypodium distachyon.</title>
        <authorList>
            <person name="Feng Y."/>
            <person name="Yin Y."/>
            <person name="Fei S."/>
        </authorList>
    </citation>
    <scope>FUNCTION</scope>
    <scope>DISRUPTION PHENOTYPE</scope>
    <scope>INDUCTION BY VERNALIZATION</scope>
    <scope>NOMENCLATURE</scope>
    <source>
        <strain>cv. Bd21</strain>
        <strain>cv. Bd29-1</strain>
    </source>
</reference>
<reference key="5">
    <citation type="journal article" date="2017" name="Proc. Natl. Acad. Sci. U.S.A.">
        <title>Establishment of a vernalization requirement in Brachypodium distachyon requires REPRESSOR OF VERNALIZATION1.</title>
        <authorList>
            <person name="Woods D.P."/>
            <person name="Ream T.S."/>
            <person name="Bouche F."/>
            <person name="Lee J."/>
            <person name="Thrower N."/>
            <person name="Wilkerson C."/>
            <person name="Amasino R.M."/>
        </authorList>
    </citation>
    <scope>FUNCTION</scope>
    <scope>DISRUPTION PHENOTYPE</scope>
    <scope>REPRESSION BY RVR1</scope>
    <source>
        <strain>cv. Bd21-3</strain>
    </source>
</reference>
<accession>I1GN76</accession>
<feature type="chain" id="PRO_0000458552" description="Protein VERNALIZATION 1">
    <location>
        <begin position="1"/>
        <end position="243"/>
    </location>
</feature>
<feature type="domain" description="MADS-box" evidence="2">
    <location>
        <begin position="1"/>
        <end position="61"/>
    </location>
</feature>
<feature type="domain" description="K-box" evidence="3">
    <location>
        <begin position="88"/>
        <end position="178"/>
    </location>
</feature>
<feature type="region of interest" description="Disordered" evidence="4">
    <location>
        <begin position="173"/>
        <end position="243"/>
    </location>
</feature>
<feature type="coiled-coil region" evidence="1">
    <location>
        <begin position="122"/>
        <end position="178"/>
    </location>
</feature>
<feature type="compositionally biased region" description="Polar residues" evidence="4">
    <location>
        <begin position="179"/>
        <end position="192"/>
    </location>
</feature>
<sequence length="243" mass="27901">MGRGKVQLKRIENKINRQVTFSKRRSGLLKKAHEISVLCDAEVALIIFSTKGKLYEFATDSCMDKILERYERYSYAEKVLVSTESEIQGNWCHEYRKLKAKVETIQKCQKHLMGEDLESLNLKELQQLEQQLESSLKHIRSRKNQLMHESISELQRKERSLQEENKALQKELVEKQKAHTQQAQWEQTHPQTSSSSSSMQREAPPTTNISNRPAAAGERTEEAAGQAQARVGLPPWMVSHISG</sequence>
<evidence type="ECO:0000255" key="1"/>
<evidence type="ECO:0000255" key="2">
    <source>
        <dbReference type="PROSITE-ProRule" id="PRU00251"/>
    </source>
</evidence>
<evidence type="ECO:0000255" key="3">
    <source>
        <dbReference type="PROSITE-ProRule" id="PRU00629"/>
    </source>
</evidence>
<evidence type="ECO:0000256" key="4">
    <source>
        <dbReference type="SAM" id="MobiDB-lite"/>
    </source>
</evidence>
<evidence type="ECO:0000269" key="5">
    <source>
    </source>
</evidence>
<evidence type="ECO:0000269" key="6">
    <source>
    </source>
</evidence>
<evidence type="ECO:0000303" key="7">
    <source>
    </source>
</evidence>
<evidence type="ECO:0000303" key="8">
    <source>
    </source>
</evidence>
<evidence type="ECO:0000312" key="9">
    <source>
        <dbReference type="EMBL" id="KQK13150.1"/>
    </source>
</evidence>
<keyword id="KW-0175">Coiled coil</keyword>
<keyword id="KW-0238">DNA-binding</keyword>
<keyword id="KW-0539">Nucleus</keyword>
<keyword id="KW-1185">Reference proteome</keyword>
<keyword id="KW-0804">Transcription</keyword>
<keyword id="KW-0805">Transcription regulation</keyword>
<name>VRN1_BRADI</name>
<proteinExistence type="evidence at transcript level"/>